<keyword id="KW-0030">Aminoacyl-tRNA synthetase</keyword>
<keyword id="KW-0067">ATP-binding</keyword>
<keyword id="KW-0963">Cytoplasm</keyword>
<keyword id="KW-0436">Ligase</keyword>
<keyword id="KW-0460">Magnesium</keyword>
<keyword id="KW-0479">Metal-binding</keyword>
<keyword id="KW-0547">Nucleotide-binding</keyword>
<keyword id="KW-0648">Protein biosynthesis</keyword>
<gene>
    <name evidence="1" type="primary">pheS</name>
    <name type="ordered locus">Pcal_0795</name>
</gene>
<sequence length="488" mass="55926">MLVLPPPLYEIVKRAQEWRPLDEIARELGVTQESLMRYVEEGRAKGVLQVDKRYAVAYELTEEGALRVREGLPEYKLLKAAVCDEARCVIELKHPEAPLALANLAKLGVKPRGGVIELSRDVYERVLASIEEKQRALAQLDSAPPDLLQEFLRRKLVKKVEKTLIYVKAAAPLDSVKPAEVKTALTSEDIATGRWREYYLKPFDLSIEPPQYPAPVPHFFNEFLNYVREVMVGLGFEEVRGPILEVEFWNFDALFQAQDHPAREVHDTFYVHWDGPREEPPRHLMEAVGRVHEEKWRYKWSPQKALNLVLRTQTTATTIRALAERGEGAYKVFTIGRVFRPEKLDPKHSMEFHQLDGIVVGPGLTFKHLLGQLEQIAKALGMGRVKFRPAYFPFTSPSVEVYAEHPTLGWVEFGGAGIFRPEVTEPLGVKNSRVLAWGWGLDRVAMILLGIDDIRDLFTKDLDKLREYYARWEKYRRGVGTRGIKYTL</sequence>
<name>SYFA_PYRCJ</name>
<reference key="1">
    <citation type="submission" date="2007-02" db="EMBL/GenBank/DDBJ databases">
        <title>Complete sequence of Pyrobaculum calidifontis JCM 11548.</title>
        <authorList>
            <consortium name="US DOE Joint Genome Institute"/>
            <person name="Copeland A."/>
            <person name="Lucas S."/>
            <person name="Lapidus A."/>
            <person name="Barry K."/>
            <person name="Glavina del Rio T."/>
            <person name="Dalin E."/>
            <person name="Tice H."/>
            <person name="Pitluck S."/>
            <person name="Chain P."/>
            <person name="Malfatti S."/>
            <person name="Shin M."/>
            <person name="Vergez L."/>
            <person name="Schmutz J."/>
            <person name="Larimer F."/>
            <person name="Land M."/>
            <person name="Hauser L."/>
            <person name="Kyrpides N."/>
            <person name="Mikhailova N."/>
            <person name="Cozen A.E."/>
            <person name="Fitz-Gibbon S.T."/>
            <person name="House C.H."/>
            <person name="Saltikov C."/>
            <person name="Lowe T.M."/>
            <person name="Richardson P."/>
        </authorList>
    </citation>
    <scope>NUCLEOTIDE SEQUENCE [LARGE SCALE GENOMIC DNA]</scope>
    <source>
        <strain>DSM 21063 / JCM 11548 / VA1</strain>
    </source>
</reference>
<organism>
    <name type="scientific">Pyrobaculum calidifontis (strain DSM 21063 / JCM 11548 / VA1)</name>
    <dbReference type="NCBI Taxonomy" id="410359"/>
    <lineage>
        <taxon>Archaea</taxon>
        <taxon>Thermoproteota</taxon>
        <taxon>Thermoprotei</taxon>
        <taxon>Thermoproteales</taxon>
        <taxon>Thermoproteaceae</taxon>
        <taxon>Pyrobaculum</taxon>
    </lineage>
</organism>
<evidence type="ECO:0000255" key="1">
    <source>
        <dbReference type="HAMAP-Rule" id="MF_00282"/>
    </source>
</evidence>
<dbReference type="EC" id="6.1.1.20" evidence="1"/>
<dbReference type="EMBL" id="CP000561">
    <property type="protein sequence ID" value="ABO08221.1"/>
    <property type="molecule type" value="Genomic_DNA"/>
</dbReference>
<dbReference type="RefSeq" id="WP_011849479.1">
    <property type="nucleotide sequence ID" value="NC_009073.1"/>
</dbReference>
<dbReference type="SMR" id="A3MUA4"/>
<dbReference type="STRING" id="410359.Pcal_0795"/>
<dbReference type="GeneID" id="4909929"/>
<dbReference type="KEGG" id="pcl:Pcal_0795"/>
<dbReference type="eggNOG" id="arCOG00410">
    <property type="taxonomic scope" value="Archaea"/>
</dbReference>
<dbReference type="HOGENOM" id="CLU_025086_2_2_2"/>
<dbReference type="OrthoDB" id="372178at2157"/>
<dbReference type="Proteomes" id="UP000001431">
    <property type="component" value="Chromosome"/>
</dbReference>
<dbReference type="GO" id="GO:0005737">
    <property type="term" value="C:cytoplasm"/>
    <property type="evidence" value="ECO:0007669"/>
    <property type="project" value="UniProtKB-SubCell"/>
</dbReference>
<dbReference type="GO" id="GO:0005524">
    <property type="term" value="F:ATP binding"/>
    <property type="evidence" value="ECO:0007669"/>
    <property type="project" value="UniProtKB-UniRule"/>
</dbReference>
<dbReference type="GO" id="GO:0000287">
    <property type="term" value="F:magnesium ion binding"/>
    <property type="evidence" value="ECO:0007669"/>
    <property type="project" value="UniProtKB-UniRule"/>
</dbReference>
<dbReference type="GO" id="GO:0004826">
    <property type="term" value="F:phenylalanine-tRNA ligase activity"/>
    <property type="evidence" value="ECO:0007669"/>
    <property type="project" value="UniProtKB-UniRule"/>
</dbReference>
<dbReference type="GO" id="GO:0000049">
    <property type="term" value="F:tRNA binding"/>
    <property type="evidence" value="ECO:0007669"/>
    <property type="project" value="InterPro"/>
</dbReference>
<dbReference type="GO" id="GO:0006432">
    <property type="term" value="P:phenylalanyl-tRNA aminoacylation"/>
    <property type="evidence" value="ECO:0007669"/>
    <property type="project" value="UniProtKB-UniRule"/>
</dbReference>
<dbReference type="CDD" id="cd00496">
    <property type="entry name" value="PheRS_alpha_core"/>
    <property type="match status" value="1"/>
</dbReference>
<dbReference type="FunFam" id="3.30.930.10:FF:000095">
    <property type="entry name" value="Phenylalanine--tRNA ligase alpha subunit"/>
    <property type="match status" value="1"/>
</dbReference>
<dbReference type="Gene3D" id="1.10.10.2320">
    <property type="match status" value="1"/>
</dbReference>
<dbReference type="Gene3D" id="1.10.10.2330">
    <property type="match status" value="1"/>
</dbReference>
<dbReference type="Gene3D" id="3.30.1370.240">
    <property type="match status" value="1"/>
</dbReference>
<dbReference type="Gene3D" id="3.30.930.10">
    <property type="entry name" value="Bira Bifunctional Protein, Domain 2"/>
    <property type="match status" value="1"/>
</dbReference>
<dbReference type="HAMAP" id="MF_00282">
    <property type="entry name" value="Phe_tRNA_synth_alpha2"/>
    <property type="match status" value="1"/>
</dbReference>
<dbReference type="InterPro" id="IPR006195">
    <property type="entry name" value="aa-tRNA-synth_II"/>
</dbReference>
<dbReference type="InterPro" id="IPR045864">
    <property type="entry name" value="aa-tRNA-synth_II/BPL/LPL"/>
</dbReference>
<dbReference type="InterPro" id="IPR004529">
    <property type="entry name" value="Phe-tRNA-synth_IIc_asu"/>
</dbReference>
<dbReference type="InterPro" id="IPR022917">
    <property type="entry name" value="Phe_tRNA_ligase_alpha_bac/arc"/>
</dbReference>
<dbReference type="InterPro" id="IPR002319">
    <property type="entry name" value="Phenylalanyl-tRNA_Synthase"/>
</dbReference>
<dbReference type="NCBIfam" id="TIGR00468">
    <property type="entry name" value="pheS"/>
    <property type="match status" value="1"/>
</dbReference>
<dbReference type="NCBIfam" id="NF003210">
    <property type="entry name" value="PRK04172.1"/>
    <property type="match status" value="1"/>
</dbReference>
<dbReference type="PANTHER" id="PTHR11538:SF40">
    <property type="entry name" value="PHENYLALANINE--TRNA LIGASE ALPHA SUBUNIT"/>
    <property type="match status" value="1"/>
</dbReference>
<dbReference type="PANTHER" id="PTHR11538">
    <property type="entry name" value="PHENYLALANYL-TRNA SYNTHETASE"/>
    <property type="match status" value="1"/>
</dbReference>
<dbReference type="Pfam" id="PF01409">
    <property type="entry name" value="tRNA-synt_2d"/>
    <property type="match status" value="1"/>
</dbReference>
<dbReference type="SUPFAM" id="SSF55681">
    <property type="entry name" value="Class II aaRS and biotin synthetases"/>
    <property type="match status" value="1"/>
</dbReference>
<dbReference type="PROSITE" id="PS50862">
    <property type="entry name" value="AA_TRNA_LIGASE_II"/>
    <property type="match status" value="1"/>
</dbReference>
<comment type="catalytic activity">
    <reaction evidence="1">
        <text>tRNA(Phe) + L-phenylalanine + ATP = L-phenylalanyl-tRNA(Phe) + AMP + diphosphate + H(+)</text>
        <dbReference type="Rhea" id="RHEA:19413"/>
        <dbReference type="Rhea" id="RHEA-COMP:9668"/>
        <dbReference type="Rhea" id="RHEA-COMP:9699"/>
        <dbReference type="ChEBI" id="CHEBI:15378"/>
        <dbReference type="ChEBI" id="CHEBI:30616"/>
        <dbReference type="ChEBI" id="CHEBI:33019"/>
        <dbReference type="ChEBI" id="CHEBI:58095"/>
        <dbReference type="ChEBI" id="CHEBI:78442"/>
        <dbReference type="ChEBI" id="CHEBI:78531"/>
        <dbReference type="ChEBI" id="CHEBI:456215"/>
        <dbReference type="EC" id="6.1.1.20"/>
    </reaction>
</comment>
<comment type="cofactor">
    <cofactor evidence="1">
        <name>Mg(2+)</name>
        <dbReference type="ChEBI" id="CHEBI:18420"/>
    </cofactor>
    <text evidence="1">Binds 2 magnesium ions per tetramer.</text>
</comment>
<comment type="subunit">
    <text evidence="1">Tetramer of two alpha and two beta subunits.</text>
</comment>
<comment type="subcellular location">
    <subcellularLocation>
        <location evidence="1">Cytoplasm</location>
    </subcellularLocation>
</comment>
<comment type="similarity">
    <text evidence="1">Belongs to the class-II aminoacyl-tRNA synthetase family. Phe-tRNA synthetase alpha subunit type 2 subfamily.</text>
</comment>
<feature type="chain" id="PRO_1000007668" description="Phenylalanine--tRNA ligase alpha subunit">
    <location>
        <begin position="1"/>
        <end position="488"/>
    </location>
</feature>
<feature type="binding site" evidence="1">
    <location>
        <position position="315"/>
    </location>
    <ligand>
        <name>L-phenylalanine</name>
        <dbReference type="ChEBI" id="CHEBI:58095"/>
    </ligand>
</feature>
<feature type="binding site" evidence="1">
    <location>
        <begin position="354"/>
        <end position="356"/>
    </location>
    <ligand>
        <name>L-phenylalanine</name>
        <dbReference type="ChEBI" id="CHEBI:58095"/>
    </ligand>
</feature>
<feature type="binding site" evidence="1">
    <location>
        <position position="394"/>
    </location>
    <ligand>
        <name>L-phenylalanine</name>
        <dbReference type="ChEBI" id="CHEBI:58095"/>
    </ligand>
</feature>
<feature type="binding site" evidence="1">
    <location>
        <position position="419"/>
    </location>
    <ligand>
        <name>L-phenylalanine</name>
        <dbReference type="ChEBI" id="CHEBI:58095"/>
    </ligand>
</feature>
<accession>A3MUA4</accession>
<protein>
    <recommendedName>
        <fullName evidence="1">Phenylalanine--tRNA ligase alpha subunit</fullName>
        <ecNumber evidence="1">6.1.1.20</ecNumber>
    </recommendedName>
    <alternativeName>
        <fullName evidence="1">Phenylalanyl-tRNA synthetase alpha subunit</fullName>
        <shortName evidence="1">PheRS</shortName>
    </alternativeName>
</protein>
<proteinExistence type="inferred from homology"/>